<reference key="1">
    <citation type="journal article" date="2005" name="Nat. Biotechnol.">
        <title>Complete genome sequence of the plant commensal Pseudomonas fluorescens Pf-5.</title>
        <authorList>
            <person name="Paulsen I.T."/>
            <person name="Press C.M."/>
            <person name="Ravel J."/>
            <person name="Kobayashi D.Y."/>
            <person name="Myers G.S.A."/>
            <person name="Mavrodi D.V."/>
            <person name="DeBoy R.T."/>
            <person name="Seshadri R."/>
            <person name="Ren Q."/>
            <person name="Madupu R."/>
            <person name="Dodson R.J."/>
            <person name="Durkin A.S."/>
            <person name="Brinkac L.M."/>
            <person name="Daugherty S.C."/>
            <person name="Sullivan S.A."/>
            <person name="Rosovitz M.J."/>
            <person name="Gwinn M.L."/>
            <person name="Zhou L."/>
            <person name="Schneider D.J."/>
            <person name="Cartinhour S.W."/>
            <person name="Nelson W.C."/>
            <person name="Weidman J."/>
            <person name="Watkins K."/>
            <person name="Tran K."/>
            <person name="Khouri H."/>
            <person name="Pierson E.A."/>
            <person name="Pierson L.S. III"/>
            <person name="Thomashow L.S."/>
            <person name="Loper J.E."/>
        </authorList>
    </citation>
    <scope>NUCLEOTIDE SEQUENCE [LARGE SCALE GENOMIC DNA]</scope>
    <source>
        <strain>ATCC BAA-477 / NRRL B-23932 / Pf-5</strain>
    </source>
</reference>
<sequence>MKRICSIYKSPRKNEMYLYVLKSEALERVPENLLLAFGKPQHAFDLVLSPERKLSREDIHQVLENLDKQGYHLQMPPAEDEYIEHLPEELLRRNDPV</sequence>
<protein>
    <recommendedName>
        <fullName evidence="1">YcgL domain-containing protein PFL_1496</fullName>
    </recommendedName>
</protein>
<dbReference type="EMBL" id="CP000076">
    <property type="protein sequence ID" value="AAY90779.1"/>
    <property type="molecule type" value="Genomic_DNA"/>
</dbReference>
<dbReference type="RefSeq" id="WP_011059834.1">
    <property type="nucleotide sequence ID" value="NC_004129.6"/>
</dbReference>
<dbReference type="SMR" id="Q4KGL0"/>
<dbReference type="STRING" id="220664.PFL_1496"/>
<dbReference type="KEGG" id="pfl:PFL_1496"/>
<dbReference type="PATRIC" id="fig|220664.5.peg.1530"/>
<dbReference type="eggNOG" id="COG3100">
    <property type="taxonomic scope" value="Bacteria"/>
</dbReference>
<dbReference type="HOGENOM" id="CLU_155118_2_0_6"/>
<dbReference type="Proteomes" id="UP000008540">
    <property type="component" value="Chromosome"/>
</dbReference>
<dbReference type="Gene3D" id="3.10.510.20">
    <property type="entry name" value="YcgL domain"/>
    <property type="match status" value="1"/>
</dbReference>
<dbReference type="HAMAP" id="MF_01866">
    <property type="entry name" value="UPF0745"/>
    <property type="match status" value="1"/>
</dbReference>
<dbReference type="InterPro" id="IPR038068">
    <property type="entry name" value="YcgL-like_sf"/>
</dbReference>
<dbReference type="InterPro" id="IPR027354">
    <property type="entry name" value="YcgL_dom"/>
</dbReference>
<dbReference type="PANTHER" id="PTHR38109">
    <property type="entry name" value="PROTEIN YCGL"/>
    <property type="match status" value="1"/>
</dbReference>
<dbReference type="PANTHER" id="PTHR38109:SF1">
    <property type="entry name" value="PROTEIN YCGL"/>
    <property type="match status" value="1"/>
</dbReference>
<dbReference type="Pfam" id="PF05166">
    <property type="entry name" value="YcgL"/>
    <property type="match status" value="1"/>
</dbReference>
<dbReference type="SUPFAM" id="SSF160191">
    <property type="entry name" value="YcgL-like"/>
    <property type="match status" value="1"/>
</dbReference>
<dbReference type="PROSITE" id="PS51648">
    <property type="entry name" value="YCGL"/>
    <property type="match status" value="1"/>
</dbReference>
<evidence type="ECO:0000255" key="1">
    <source>
        <dbReference type="HAMAP-Rule" id="MF_01866"/>
    </source>
</evidence>
<proteinExistence type="inferred from homology"/>
<name>Y1496_PSEF5</name>
<feature type="chain" id="PRO_0000375332" description="YcgL domain-containing protein PFL_1496">
    <location>
        <begin position="1"/>
        <end position="97"/>
    </location>
</feature>
<feature type="domain" description="YcgL" evidence="1">
    <location>
        <begin position="3"/>
        <end position="87"/>
    </location>
</feature>
<organism>
    <name type="scientific">Pseudomonas fluorescens (strain ATCC BAA-477 / NRRL B-23932 / Pf-5)</name>
    <dbReference type="NCBI Taxonomy" id="220664"/>
    <lineage>
        <taxon>Bacteria</taxon>
        <taxon>Pseudomonadati</taxon>
        <taxon>Pseudomonadota</taxon>
        <taxon>Gammaproteobacteria</taxon>
        <taxon>Pseudomonadales</taxon>
        <taxon>Pseudomonadaceae</taxon>
        <taxon>Pseudomonas</taxon>
    </lineage>
</organism>
<accession>Q4KGL0</accession>
<gene>
    <name type="ordered locus">PFL_1496</name>
</gene>